<protein>
    <recommendedName>
        <fullName evidence="1">tRNA 2-selenouridine synthase</fullName>
        <ecNumber evidence="1">2.9.1.3</ecNumber>
    </recommendedName>
</protein>
<organism>
    <name type="scientific">Escherichia coli O81 (strain ED1a)</name>
    <dbReference type="NCBI Taxonomy" id="585397"/>
    <lineage>
        <taxon>Bacteria</taxon>
        <taxon>Pseudomonadati</taxon>
        <taxon>Pseudomonadota</taxon>
        <taxon>Gammaproteobacteria</taxon>
        <taxon>Enterobacterales</taxon>
        <taxon>Enterobacteriaceae</taxon>
        <taxon>Escherichia</taxon>
    </lineage>
</organism>
<feature type="chain" id="PRO_1000186069" description="tRNA 2-selenouridine synthase">
    <location>
        <begin position="1"/>
        <end position="364"/>
    </location>
</feature>
<feature type="domain" description="Rhodanese" evidence="1">
    <location>
        <begin position="14"/>
        <end position="137"/>
    </location>
</feature>
<feature type="active site" description="S-selanylcysteine intermediate" evidence="1">
    <location>
        <position position="97"/>
    </location>
</feature>
<name>SELU_ECO81</name>
<gene>
    <name evidence="1" type="primary">selU</name>
    <name type="ordered locus">ECED1_0524</name>
</gene>
<reference key="1">
    <citation type="journal article" date="2009" name="PLoS Genet.">
        <title>Organised genome dynamics in the Escherichia coli species results in highly diverse adaptive paths.</title>
        <authorList>
            <person name="Touchon M."/>
            <person name="Hoede C."/>
            <person name="Tenaillon O."/>
            <person name="Barbe V."/>
            <person name="Baeriswyl S."/>
            <person name="Bidet P."/>
            <person name="Bingen E."/>
            <person name="Bonacorsi S."/>
            <person name="Bouchier C."/>
            <person name="Bouvet O."/>
            <person name="Calteau A."/>
            <person name="Chiapello H."/>
            <person name="Clermont O."/>
            <person name="Cruveiller S."/>
            <person name="Danchin A."/>
            <person name="Diard M."/>
            <person name="Dossat C."/>
            <person name="Karoui M.E."/>
            <person name="Frapy E."/>
            <person name="Garry L."/>
            <person name="Ghigo J.M."/>
            <person name="Gilles A.M."/>
            <person name="Johnson J."/>
            <person name="Le Bouguenec C."/>
            <person name="Lescat M."/>
            <person name="Mangenot S."/>
            <person name="Martinez-Jehanne V."/>
            <person name="Matic I."/>
            <person name="Nassif X."/>
            <person name="Oztas S."/>
            <person name="Petit M.A."/>
            <person name="Pichon C."/>
            <person name="Rouy Z."/>
            <person name="Ruf C.S."/>
            <person name="Schneider D."/>
            <person name="Tourret J."/>
            <person name="Vacherie B."/>
            <person name="Vallenet D."/>
            <person name="Medigue C."/>
            <person name="Rocha E.P.C."/>
            <person name="Denamur E."/>
        </authorList>
    </citation>
    <scope>NUCLEOTIDE SEQUENCE [LARGE SCALE GENOMIC DNA]</scope>
    <source>
        <strain>ED1a</strain>
    </source>
</reference>
<keyword id="KW-0711">Selenium</keyword>
<keyword id="KW-0808">Transferase</keyword>
<dbReference type="EC" id="2.9.1.3" evidence="1"/>
<dbReference type="EMBL" id="CU928162">
    <property type="protein sequence ID" value="CAR06733.1"/>
    <property type="molecule type" value="Genomic_DNA"/>
</dbReference>
<dbReference type="RefSeq" id="WP_001157943.1">
    <property type="nucleotide sequence ID" value="NC_011745.1"/>
</dbReference>
<dbReference type="SMR" id="B7MQL5"/>
<dbReference type="KEGG" id="ecq:ECED1_0524"/>
<dbReference type="HOGENOM" id="CLU_043456_1_0_6"/>
<dbReference type="Proteomes" id="UP000000748">
    <property type="component" value="Chromosome"/>
</dbReference>
<dbReference type="GO" id="GO:0016765">
    <property type="term" value="F:transferase activity, transferring alkyl or aryl (other than methyl) groups"/>
    <property type="evidence" value="ECO:0007669"/>
    <property type="project" value="UniProtKB-UniRule"/>
</dbReference>
<dbReference type="GO" id="GO:0043828">
    <property type="term" value="F:tRNA 2-selenouridine synthase activity"/>
    <property type="evidence" value="ECO:0007669"/>
    <property type="project" value="UniProtKB-EC"/>
</dbReference>
<dbReference type="GO" id="GO:0002098">
    <property type="term" value="P:tRNA wobble uridine modification"/>
    <property type="evidence" value="ECO:0007669"/>
    <property type="project" value="UniProtKB-UniRule"/>
</dbReference>
<dbReference type="CDD" id="cd01520">
    <property type="entry name" value="RHOD_YbbB"/>
    <property type="match status" value="1"/>
</dbReference>
<dbReference type="FunFam" id="3.40.250.10:FF:000009">
    <property type="entry name" value="tRNA 2-selenouridine/geranyl-2-thiouridine synthase"/>
    <property type="match status" value="1"/>
</dbReference>
<dbReference type="Gene3D" id="3.40.250.10">
    <property type="entry name" value="Rhodanese-like domain"/>
    <property type="match status" value="1"/>
</dbReference>
<dbReference type="HAMAP" id="MF_01622">
    <property type="entry name" value="tRNA_sel_U_synth"/>
    <property type="match status" value="1"/>
</dbReference>
<dbReference type="InterPro" id="IPR001763">
    <property type="entry name" value="Rhodanese-like_dom"/>
</dbReference>
<dbReference type="InterPro" id="IPR036873">
    <property type="entry name" value="Rhodanese-like_dom_sf"/>
</dbReference>
<dbReference type="InterPro" id="IPR017582">
    <property type="entry name" value="SelU"/>
</dbReference>
<dbReference type="NCBIfam" id="NF008749">
    <property type="entry name" value="PRK11784.1-1"/>
    <property type="match status" value="1"/>
</dbReference>
<dbReference type="NCBIfam" id="NF008751">
    <property type="entry name" value="PRK11784.1-3"/>
    <property type="match status" value="1"/>
</dbReference>
<dbReference type="NCBIfam" id="TIGR03167">
    <property type="entry name" value="tRNA_sel_U_synt"/>
    <property type="match status" value="1"/>
</dbReference>
<dbReference type="PANTHER" id="PTHR30401">
    <property type="entry name" value="TRNA 2-SELENOURIDINE SYNTHASE"/>
    <property type="match status" value="1"/>
</dbReference>
<dbReference type="PANTHER" id="PTHR30401:SF0">
    <property type="entry name" value="TRNA 2-SELENOURIDINE SYNTHASE"/>
    <property type="match status" value="1"/>
</dbReference>
<dbReference type="SMART" id="SM00450">
    <property type="entry name" value="RHOD"/>
    <property type="match status" value="1"/>
</dbReference>
<dbReference type="SUPFAM" id="SSF52821">
    <property type="entry name" value="Rhodanese/Cell cycle control phosphatase"/>
    <property type="match status" value="1"/>
</dbReference>
<dbReference type="PROSITE" id="PS50206">
    <property type="entry name" value="RHODANESE_3"/>
    <property type="match status" value="1"/>
</dbReference>
<evidence type="ECO:0000255" key="1">
    <source>
        <dbReference type="HAMAP-Rule" id="MF_01622"/>
    </source>
</evidence>
<accession>B7MQL5</accession>
<sequence length="364" mass="41220">MQERHTEQDYRALLIADTPIIDVRAPIEFEQGAMPAAINLPLMNNDERAAVGICYKQQGSDAALALGHKLVAGEIRQQRIDAWRAACLQNPHGILCCARGGQRSHIVQRWLHDAGIDYPLVEGGYKALRQTAIQATIELAQKPIVLIGGCTGSGKTLLVQQQPNGVDLEGLARHRGSAFGRTLQPQLSQASFENMLAAEMLKTDAHQDLRLWVLEDESRMIGSNHLPECLRERMTQATIAVVEDPFEIRLERLNEEYFLRMHHDFTHAYGDEQGWQEYCEYLHHGLSAIKRRLGLQRYNELAARLDAALTTQLTTGSTDGHLAWLVPLLEEYYDPMYRYQLEKKAEKVVFRGEWAEVAEWVKAQ</sequence>
<proteinExistence type="inferred from homology"/>
<comment type="function">
    <text evidence="1">Involved in the post-transcriptional modification of the uridine at the wobble position (U34) of tRNA(Lys), tRNA(Glu) and tRNA(Gln). Catalyzes the conversion of 2-thiouridine (S2U-RNA) to 2-selenouridine (Se2U-RNA). Acts in a two-step process involving geranylation of 2-thiouridine (S2U) to S-geranyl-2-thiouridine (geS2U) and subsequent selenation of the latter derivative to 2-selenouridine (Se2U) in the tRNA chain.</text>
</comment>
<comment type="catalytic activity">
    <reaction evidence="1">
        <text>5-methylaminomethyl-2-thiouridine(34) in tRNA + selenophosphate + (2E)-geranyl diphosphate + H2O + H(+) = 5-methylaminomethyl-2-selenouridine(34) in tRNA + (2E)-thiogeraniol + phosphate + diphosphate</text>
        <dbReference type="Rhea" id="RHEA:42716"/>
        <dbReference type="Rhea" id="RHEA-COMP:10195"/>
        <dbReference type="Rhea" id="RHEA-COMP:10196"/>
        <dbReference type="ChEBI" id="CHEBI:15377"/>
        <dbReference type="ChEBI" id="CHEBI:15378"/>
        <dbReference type="ChEBI" id="CHEBI:16144"/>
        <dbReference type="ChEBI" id="CHEBI:33019"/>
        <dbReference type="ChEBI" id="CHEBI:43474"/>
        <dbReference type="ChEBI" id="CHEBI:58057"/>
        <dbReference type="ChEBI" id="CHEBI:74455"/>
        <dbReference type="ChEBI" id="CHEBI:82743"/>
        <dbReference type="ChEBI" id="CHEBI:143703"/>
        <dbReference type="EC" id="2.9.1.3"/>
    </reaction>
    <physiologicalReaction direction="left-to-right" evidence="1">
        <dbReference type="Rhea" id="RHEA:42717"/>
    </physiologicalReaction>
</comment>
<comment type="catalytic activity">
    <reaction evidence="1">
        <text>5-methylaminomethyl-2-thiouridine(34) in tRNA + (2E)-geranyl diphosphate = 5-methylaminomethyl-S-(2E)-geranyl-thiouridine(34) in tRNA + diphosphate</text>
        <dbReference type="Rhea" id="RHEA:14085"/>
        <dbReference type="Rhea" id="RHEA-COMP:10195"/>
        <dbReference type="Rhea" id="RHEA-COMP:14654"/>
        <dbReference type="ChEBI" id="CHEBI:33019"/>
        <dbReference type="ChEBI" id="CHEBI:58057"/>
        <dbReference type="ChEBI" id="CHEBI:74455"/>
        <dbReference type="ChEBI" id="CHEBI:140632"/>
    </reaction>
    <physiologicalReaction direction="left-to-right" evidence="1">
        <dbReference type="Rhea" id="RHEA:14086"/>
    </physiologicalReaction>
</comment>
<comment type="catalytic activity">
    <reaction evidence="1">
        <text>5-methylaminomethyl-S-(2E)-geranyl-thiouridine(34) in tRNA + selenophosphate + H(+) = 5-methylaminomethyl-2-(Se-phospho)selenouridine(34) in tRNA + (2E)-thiogeraniol</text>
        <dbReference type="Rhea" id="RHEA:60172"/>
        <dbReference type="Rhea" id="RHEA-COMP:14654"/>
        <dbReference type="Rhea" id="RHEA-COMP:15523"/>
        <dbReference type="ChEBI" id="CHEBI:15378"/>
        <dbReference type="ChEBI" id="CHEBI:16144"/>
        <dbReference type="ChEBI" id="CHEBI:140632"/>
        <dbReference type="ChEBI" id="CHEBI:143702"/>
        <dbReference type="ChEBI" id="CHEBI:143703"/>
    </reaction>
    <physiologicalReaction direction="left-to-right" evidence="1">
        <dbReference type="Rhea" id="RHEA:60173"/>
    </physiologicalReaction>
</comment>
<comment type="catalytic activity">
    <reaction evidence="1">
        <text>5-methylaminomethyl-2-(Se-phospho)selenouridine(34) in tRNA + H2O = 5-methylaminomethyl-2-selenouridine(34) in tRNA + phosphate</text>
        <dbReference type="Rhea" id="RHEA:60176"/>
        <dbReference type="Rhea" id="RHEA-COMP:10196"/>
        <dbReference type="Rhea" id="RHEA-COMP:15523"/>
        <dbReference type="ChEBI" id="CHEBI:15377"/>
        <dbReference type="ChEBI" id="CHEBI:43474"/>
        <dbReference type="ChEBI" id="CHEBI:82743"/>
        <dbReference type="ChEBI" id="CHEBI:143702"/>
    </reaction>
    <physiologicalReaction direction="left-to-right" evidence="1">
        <dbReference type="Rhea" id="RHEA:60177"/>
    </physiologicalReaction>
</comment>
<comment type="subunit">
    <text evidence="1">Monomer.</text>
</comment>
<comment type="similarity">
    <text evidence="1">Belongs to the SelU family.</text>
</comment>